<name>LACG_STRPQ</name>
<evidence type="ECO:0000255" key="1">
    <source>
        <dbReference type="HAMAP-Rule" id="MF_01574"/>
    </source>
</evidence>
<sequence>MTKTLPKDFIFGGATAAYQAEGATHTDGKGPVAWDKYLEDNYWYTAEPASDFYNRYPVDLKLSEEFGVNGIRISIAWSRIFPTGKGEVNPKGVEYYHNLFAECHKRHVEPFVTLHHFDTPEALHSDGDFLNRENIEHFVNYAEFCFKEFSEVNYWTTFNEIGPIGDGQYLVGKFPPGIQYDLAKVFQSHHNMMVSHARAVKLFKDSGYSGEIGVVHALPTKYPFDANNPDDVRAAELEDIIHNKFILDATYLGKYSDKTMEGVNHILEVNGGELDLREEDFAALDAAKDLNDFLGINYYMSDWMQAFDGETEIIHNGKGEKGSSKYQIKGVGRRKAPVDVPKTDWDWIIFPQGLYDQIMRVKADYPNYKKIYITENGLGYKDEFVDNTVYDDGRIDYVKKHLEVISDAISDGVNVKGYFMWSLMDVFSWSNGYEKRYGLFYVDFETQERYPKKSAYWYKKVAETQVIE</sequence>
<reference key="1">
    <citation type="journal article" date="2003" name="Genome Res.">
        <title>Genome sequence of an M3 strain of Streptococcus pyogenes reveals a large-scale genomic rearrangement in invasive strains and new insights into phage evolution.</title>
        <authorList>
            <person name="Nakagawa I."/>
            <person name="Kurokawa K."/>
            <person name="Yamashita A."/>
            <person name="Nakata M."/>
            <person name="Tomiyasu Y."/>
            <person name="Okahashi N."/>
            <person name="Kawabata S."/>
            <person name="Yamazaki K."/>
            <person name="Shiba T."/>
            <person name="Yasunaga T."/>
            <person name="Hayashi H."/>
            <person name="Hattori M."/>
            <person name="Hamada S."/>
        </authorList>
    </citation>
    <scope>NUCLEOTIDE SEQUENCE [LARGE SCALE GENOMIC DNA]</scope>
    <source>
        <strain>SSI-1</strain>
    </source>
</reference>
<proteinExistence type="inferred from homology"/>
<gene>
    <name evidence="1" type="primary">lacG</name>
    <name type="ordered locus">SPs1651</name>
</gene>
<organism>
    <name type="scientific">Streptococcus pyogenes serotype M3 (strain SSI-1)</name>
    <dbReference type="NCBI Taxonomy" id="193567"/>
    <lineage>
        <taxon>Bacteria</taxon>
        <taxon>Bacillati</taxon>
        <taxon>Bacillota</taxon>
        <taxon>Bacilli</taxon>
        <taxon>Lactobacillales</taxon>
        <taxon>Streptococcaceae</taxon>
        <taxon>Streptococcus</taxon>
    </lineage>
</organism>
<protein>
    <recommendedName>
        <fullName evidence="1">6-phospho-beta-galactosidase</fullName>
        <ecNumber evidence="1">3.2.1.85</ecNumber>
    </recommendedName>
    <alternativeName>
        <fullName evidence="1">Beta-D-phosphogalactoside galactohydrolase</fullName>
        <shortName evidence="1">PGALase</shortName>
    </alternativeName>
    <alternativeName>
        <fullName evidence="1">P-beta-Gal</fullName>
        <shortName evidence="1">PBG</shortName>
    </alternativeName>
</protein>
<keyword id="KW-0326">Glycosidase</keyword>
<keyword id="KW-0378">Hydrolase</keyword>
<comment type="catalytic activity">
    <reaction evidence="1">
        <text>a 6-phospho-beta-D-galactoside + H2O = D-galactose 6-phosphate + an alcohol</text>
        <dbReference type="Rhea" id="RHEA:24568"/>
        <dbReference type="ChEBI" id="CHEBI:15377"/>
        <dbReference type="ChEBI" id="CHEBI:30879"/>
        <dbReference type="ChEBI" id="CHEBI:58534"/>
        <dbReference type="ChEBI" id="CHEBI:91004"/>
        <dbReference type="EC" id="3.2.1.85"/>
    </reaction>
</comment>
<comment type="pathway">
    <text evidence="1">Carbohydrate metabolism; lactose degradation; D-galactose 6-phosphate and beta-D-glucose from lactose 6-phosphate: step 1/1.</text>
</comment>
<comment type="similarity">
    <text evidence="1">Belongs to the glycosyl hydrolase 1 family.</text>
</comment>
<feature type="chain" id="PRO_0000411358" description="6-phospho-beta-galactosidase">
    <location>
        <begin position="1"/>
        <end position="468"/>
    </location>
</feature>
<feature type="active site" description="Proton donor" evidence="1">
    <location>
        <position position="160"/>
    </location>
</feature>
<feature type="active site" description="Nucleophile" evidence="1">
    <location>
        <position position="375"/>
    </location>
</feature>
<feature type="binding site" evidence="1">
    <location>
        <position position="19"/>
    </location>
    <ligand>
        <name>D-galactose 6-phosphate</name>
        <dbReference type="ChEBI" id="CHEBI:91004"/>
    </ligand>
</feature>
<feature type="binding site" evidence="1">
    <location>
        <position position="116"/>
    </location>
    <ligand>
        <name>D-galactose 6-phosphate</name>
        <dbReference type="ChEBI" id="CHEBI:91004"/>
    </ligand>
</feature>
<feature type="binding site" evidence="1">
    <location>
        <position position="159"/>
    </location>
    <ligand>
        <name>D-galactose 6-phosphate</name>
        <dbReference type="ChEBI" id="CHEBI:91004"/>
    </ligand>
</feature>
<feature type="binding site" evidence="1">
    <location>
        <position position="160"/>
    </location>
    <ligand>
        <name>D-galactose 6-phosphate</name>
        <dbReference type="ChEBI" id="CHEBI:91004"/>
    </ligand>
</feature>
<feature type="binding site" evidence="1">
    <location>
        <position position="297"/>
    </location>
    <ligand>
        <name>D-galactose 6-phosphate</name>
        <dbReference type="ChEBI" id="CHEBI:91004"/>
    </ligand>
</feature>
<feature type="binding site" evidence="1">
    <location>
        <position position="428"/>
    </location>
    <ligand>
        <name>D-galactose 6-phosphate</name>
        <dbReference type="ChEBI" id="CHEBI:91004"/>
    </ligand>
</feature>
<feature type="binding site" evidence="1">
    <location>
        <position position="429"/>
    </location>
    <ligand>
        <name>D-galactose 6-phosphate</name>
        <dbReference type="ChEBI" id="CHEBI:91004"/>
    </ligand>
</feature>
<feature type="binding site" evidence="1">
    <location>
        <position position="435"/>
    </location>
    <ligand>
        <name>D-galactose 6-phosphate</name>
        <dbReference type="ChEBI" id="CHEBI:91004"/>
    </ligand>
</feature>
<feature type="binding site" evidence="1">
    <location>
        <position position="437"/>
    </location>
    <ligand>
        <name>D-galactose 6-phosphate</name>
        <dbReference type="ChEBI" id="CHEBI:91004"/>
    </ligand>
</feature>
<accession>P0DB41</accession>
<accession>Q79W99</accession>
<accession>Q8K5V1</accession>
<dbReference type="EC" id="3.2.1.85" evidence="1"/>
<dbReference type="EMBL" id="BA000034">
    <property type="protein sequence ID" value="BAC64746.1"/>
    <property type="molecule type" value="Genomic_DNA"/>
</dbReference>
<dbReference type="RefSeq" id="WP_011055001.1">
    <property type="nucleotide sequence ID" value="NC_004606.1"/>
</dbReference>
<dbReference type="SMR" id="P0DB41"/>
<dbReference type="CAZy" id="GH1">
    <property type="family name" value="Glycoside Hydrolase Family 1"/>
</dbReference>
<dbReference type="KEGG" id="sps:SPs1651"/>
<dbReference type="HOGENOM" id="CLU_001859_1_3_9"/>
<dbReference type="UniPathway" id="UPA00542">
    <property type="reaction ID" value="UER00605"/>
</dbReference>
<dbReference type="GO" id="GO:0005829">
    <property type="term" value="C:cytosol"/>
    <property type="evidence" value="ECO:0007669"/>
    <property type="project" value="TreeGrafter"/>
</dbReference>
<dbReference type="GO" id="GO:0033920">
    <property type="term" value="F:6-phospho-beta-galactosidase activity"/>
    <property type="evidence" value="ECO:0007669"/>
    <property type="project" value="UniProtKB-UniRule"/>
</dbReference>
<dbReference type="GO" id="GO:0008422">
    <property type="term" value="F:beta-glucosidase activity"/>
    <property type="evidence" value="ECO:0007669"/>
    <property type="project" value="TreeGrafter"/>
</dbReference>
<dbReference type="GO" id="GO:0019512">
    <property type="term" value="P:lactose catabolic process via tagatose-6-phosphate"/>
    <property type="evidence" value="ECO:0007669"/>
    <property type="project" value="InterPro"/>
</dbReference>
<dbReference type="FunFam" id="3.20.20.80:FF:000004">
    <property type="entry name" value="Beta-glucosidase 6-phospho-beta-glucosidase"/>
    <property type="match status" value="1"/>
</dbReference>
<dbReference type="Gene3D" id="3.20.20.80">
    <property type="entry name" value="Glycosidases"/>
    <property type="match status" value="1"/>
</dbReference>
<dbReference type="HAMAP" id="MF_01574">
    <property type="entry name" value="LacG"/>
    <property type="match status" value="1"/>
</dbReference>
<dbReference type="InterPro" id="IPR005928">
    <property type="entry name" value="6P-beta-galactosidase"/>
</dbReference>
<dbReference type="InterPro" id="IPR001360">
    <property type="entry name" value="Glyco_hydro_1"/>
</dbReference>
<dbReference type="InterPro" id="IPR018120">
    <property type="entry name" value="Glyco_hydro_1_AS"/>
</dbReference>
<dbReference type="InterPro" id="IPR033132">
    <property type="entry name" value="Glyco_hydro_1_N_CS"/>
</dbReference>
<dbReference type="InterPro" id="IPR017853">
    <property type="entry name" value="Glycoside_hydrolase_SF"/>
</dbReference>
<dbReference type="NCBIfam" id="TIGR01233">
    <property type="entry name" value="lacG"/>
    <property type="match status" value="1"/>
</dbReference>
<dbReference type="NCBIfam" id="NF010036">
    <property type="entry name" value="PRK13511.1"/>
    <property type="match status" value="1"/>
</dbReference>
<dbReference type="PANTHER" id="PTHR10353">
    <property type="entry name" value="GLYCOSYL HYDROLASE"/>
    <property type="match status" value="1"/>
</dbReference>
<dbReference type="PANTHER" id="PTHR10353:SF36">
    <property type="entry name" value="LP05116P"/>
    <property type="match status" value="1"/>
</dbReference>
<dbReference type="Pfam" id="PF00232">
    <property type="entry name" value="Glyco_hydro_1"/>
    <property type="match status" value="1"/>
</dbReference>
<dbReference type="PRINTS" id="PR00131">
    <property type="entry name" value="GLHYDRLASE1"/>
</dbReference>
<dbReference type="SUPFAM" id="SSF51445">
    <property type="entry name" value="(Trans)glycosidases"/>
    <property type="match status" value="1"/>
</dbReference>
<dbReference type="PROSITE" id="PS00572">
    <property type="entry name" value="GLYCOSYL_HYDROL_F1_1"/>
    <property type="match status" value="1"/>
</dbReference>
<dbReference type="PROSITE" id="PS00653">
    <property type="entry name" value="GLYCOSYL_HYDROL_F1_2"/>
    <property type="match status" value="1"/>
</dbReference>